<evidence type="ECO:0000255" key="1">
    <source>
        <dbReference type="HAMAP-Rule" id="MF_00672"/>
    </source>
</evidence>
<name>Y716_STRM5</name>
<accession>B4SKS3</accession>
<proteinExistence type="inferred from homology"/>
<sequence>MEPLDTLNLWMERARDRARAISFGRFLWHRFLDDRLFQAAAALAYTTVFALVPLAIVVFGVLSAFPVFDRWSDQLSDYVFSNFVPNAARAAEGYLRQFSASAGQLTAAGFIALVVSLLITLNSVEETFNQIWRVGSTRPKLTRFLVYWTVLTLGAMLAAASLAVSARVFAMPLFGTQEGRWLADLALRLAPILIEFVCITLMFRVVPHHTVKWRHAVPGAILAAVILELVKWGIGAYLGSFQSYQKLYGTVAFVPILLLWIYLCWVAVLLGASLSSSMAAFRYQPVELRLPQGYEFYGLLRLLGRFHHARAKGKGLADDEILRLEPMLTDSLLQDLACNLQEIGLLRRDERGEWLLARDLEQVSLSDLYECTQLRIPVAEQHLPYRDDTLGRVALAALDDLRLPLRERLKRKVSDIYTDSGDTP</sequence>
<keyword id="KW-0997">Cell inner membrane</keyword>
<keyword id="KW-1003">Cell membrane</keyword>
<keyword id="KW-0472">Membrane</keyword>
<keyword id="KW-0812">Transmembrane</keyword>
<keyword id="KW-1133">Transmembrane helix</keyword>
<reference key="1">
    <citation type="submission" date="2008-06" db="EMBL/GenBank/DDBJ databases">
        <title>Complete sequence of Stenotrophomonas maltophilia R551-3.</title>
        <authorList>
            <consortium name="US DOE Joint Genome Institute"/>
            <person name="Lucas S."/>
            <person name="Copeland A."/>
            <person name="Lapidus A."/>
            <person name="Glavina del Rio T."/>
            <person name="Dalin E."/>
            <person name="Tice H."/>
            <person name="Pitluck S."/>
            <person name="Chain P."/>
            <person name="Malfatti S."/>
            <person name="Shin M."/>
            <person name="Vergez L."/>
            <person name="Lang D."/>
            <person name="Schmutz J."/>
            <person name="Larimer F."/>
            <person name="Land M."/>
            <person name="Hauser L."/>
            <person name="Kyrpides N."/>
            <person name="Mikhailova N."/>
            <person name="Taghavi S."/>
            <person name="Monchy S."/>
            <person name="Newman L."/>
            <person name="Vangronsveld J."/>
            <person name="van der Lelie D."/>
            <person name="Richardson P."/>
        </authorList>
    </citation>
    <scope>NUCLEOTIDE SEQUENCE [LARGE SCALE GENOMIC DNA]</scope>
    <source>
        <strain>R551-3</strain>
    </source>
</reference>
<protein>
    <recommendedName>
        <fullName evidence="1">UPF0761 membrane protein Smal_0716</fullName>
    </recommendedName>
</protein>
<organism>
    <name type="scientific">Stenotrophomonas maltophilia (strain R551-3)</name>
    <dbReference type="NCBI Taxonomy" id="391008"/>
    <lineage>
        <taxon>Bacteria</taxon>
        <taxon>Pseudomonadati</taxon>
        <taxon>Pseudomonadota</taxon>
        <taxon>Gammaproteobacteria</taxon>
        <taxon>Lysobacterales</taxon>
        <taxon>Lysobacteraceae</taxon>
        <taxon>Stenotrophomonas</taxon>
        <taxon>Stenotrophomonas maltophilia group</taxon>
    </lineage>
</organism>
<dbReference type="EMBL" id="CP001111">
    <property type="protein sequence ID" value="ACF50421.1"/>
    <property type="molecule type" value="Genomic_DNA"/>
</dbReference>
<dbReference type="RefSeq" id="WP_012510136.1">
    <property type="nucleotide sequence ID" value="NC_011071.1"/>
</dbReference>
<dbReference type="SMR" id="B4SKS3"/>
<dbReference type="STRING" id="391008.Smal_0716"/>
<dbReference type="KEGG" id="smt:Smal_0716"/>
<dbReference type="eggNOG" id="COG1295">
    <property type="taxonomic scope" value="Bacteria"/>
</dbReference>
<dbReference type="HOGENOM" id="CLU_032288_1_0_6"/>
<dbReference type="OrthoDB" id="9808671at2"/>
<dbReference type="Proteomes" id="UP000001867">
    <property type="component" value="Chromosome"/>
</dbReference>
<dbReference type="GO" id="GO:0005886">
    <property type="term" value="C:plasma membrane"/>
    <property type="evidence" value="ECO:0007669"/>
    <property type="project" value="UniProtKB-SubCell"/>
</dbReference>
<dbReference type="HAMAP" id="MF_00672">
    <property type="entry name" value="UPF0761"/>
    <property type="match status" value="1"/>
</dbReference>
<dbReference type="InterPro" id="IPR023679">
    <property type="entry name" value="UPF0761_bac"/>
</dbReference>
<dbReference type="InterPro" id="IPR017039">
    <property type="entry name" value="Virul_fac_BrkB"/>
</dbReference>
<dbReference type="NCBIfam" id="NF003256">
    <property type="entry name" value="PRK04214.1"/>
    <property type="match status" value="1"/>
</dbReference>
<dbReference type="NCBIfam" id="TIGR00765">
    <property type="entry name" value="yihY_not_rbn"/>
    <property type="match status" value="1"/>
</dbReference>
<dbReference type="PANTHER" id="PTHR30213">
    <property type="entry name" value="INNER MEMBRANE PROTEIN YHJD"/>
    <property type="match status" value="1"/>
</dbReference>
<dbReference type="PANTHER" id="PTHR30213:SF0">
    <property type="entry name" value="UPF0761 MEMBRANE PROTEIN YIHY"/>
    <property type="match status" value="1"/>
</dbReference>
<dbReference type="Pfam" id="PF03631">
    <property type="entry name" value="Virul_fac_BrkB"/>
    <property type="match status" value="1"/>
</dbReference>
<feature type="chain" id="PRO_1000131568" description="UPF0761 membrane protein Smal_0716">
    <location>
        <begin position="1"/>
        <end position="424"/>
    </location>
</feature>
<feature type="transmembrane region" description="Helical" evidence="1">
    <location>
        <begin position="48"/>
        <end position="68"/>
    </location>
</feature>
<feature type="transmembrane region" description="Helical" evidence="1">
    <location>
        <begin position="101"/>
        <end position="121"/>
    </location>
</feature>
<feature type="transmembrane region" description="Helical" evidence="1">
    <location>
        <begin position="144"/>
        <end position="164"/>
    </location>
</feature>
<feature type="transmembrane region" description="Helical" evidence="1">
    <location>
        <begin position="181"/>
        <end position="201"/>
    </location>
</feature>
<feature type="transmembrane region" description="Helical" evidence="1">
    <location>
        <begin position="216"/>
        <end position="236"/>
    </location>
</feature>
<feature type="transmembrane region" description="Helical" evidence="1">
    <location>
        <begin position="251"/>
        <end position="271"/>
    </location>
</feature>
<gene>
    <name type="ordered locus">Smal_0716</name>
</gene>
<comment type="subcellular location">
    <subcellularLocation>
        <location evidence="1">Cell inner membrane</location>
        <topology evidence="1">Multi-pass membrane protein</topology>
    </subcellularLocation>
</comment>
<comment type="similarity">
    <text evidence="1">Belongs to the UPF0761 family.</text>
</comment>